<protein>
    <recommendedName>
        <fullName evidence="1">Phenylalanine--tRNA ligase alpha subunit</fullName>
        <ecNumber evidence="1">6.1.1.20</ecNumber>
    </recommendedName>
    <alternativeName>
        <fullName evidence="1">Phenylalanyl-tRNA synthetase alpha subunit</fullName>
        <shortName evidence="1">PheRS</shortName>
    </alternativeName>
</protein>
<accession>Q7NGP0</accession>
<reference key="1">
    <citation type="journal article" date="2003" name="DNA Res.">
        <title>Complete genome structure of Gloeobacter violaceus PCC 7421, a cyanobacterium that lacks thylakoids.</title>
        <authorList>
            <person name="Nakamura Y."/>
            <person name="Kaneko T."/>
            <person name="Sato S."/>
            <person name="Mimuro M."/>
            <person name="Miyashita H."/>
            <person name="Tsuchiya T."/>
            <person name="Sasamoto S."/>
            <person name="Watanabe A."/>
            <person name="Kawashima K."/>
            <person name="Kishida Y."/>
            <person name="Kiyokawa C."/>
            <person name="Kohara M."/>
            <person name="Matsumoto M."/>
            <person name="Matsuno A."/>
            <person name="Nakazaki N."/>
            <person name="Shimpo S."/>
            <person name="Takeuchi C."/>
            <person name="Yamada M."/>
            <person name="Tabata S."/>
        </authorList>
    </citation>
    <scope>NUCLEOTIDE SEQUENCE [LARGE SCALE GENOMIC DNA]</scope>
    <source>
        <strain>ATCC 29082 / PCC 7421</strain>
    </source>
</reference>
<sequence length="338" mass="38031">MQQQLDALQLEALKAIREAADLTILERIRVDFLGKKGKLSALLGGMARLPAEERPVVGALVNQVKARVEEALAAQQTHLQDQLIELRLVAEALDVTMPGRFVPPGRLHPLTATTDRIVDVFVGLGFTVASGPQIETEYYNFEALNTPADHPARDMQDTFYLSDGLVLRTQTSSVQIRYMEENDPPVRICVPGRVYRRDQVTNRHSPVFHQLELLAVDEEITFGDLKGTLTFFTQEMFGDRPVRFRPSFFPFTEPSAEVDVQCRFCDGKGCRTCSHTGWLEIAGCGMVDPNVFQAVGYNPEKVQGFAAGMGIERIAMLLYDINDIRLFYTNDLRFLRQF</sequence>
<gene>
    <name evidence="1" type="primary">pheS</name>
    <name type="ordered locus">glr3128</name>
</gene>
<comment type="catalytic activity">
    <reaction evidence="1">
        <text>tRNA(Phe) + L-phenylalanine + ATP = L-phenylalanyl-tRNA(Phe) + AMP + diphosphate + H(+)</text>
        <dbReference type="Rhea" id="RHEA:19413"/>
        <dbReference type="Rhea" id="RHEA-COMP:9668"/>
        <dbReference type="Rhea" id="RHEA-COMP:9699"/>
        <dbReference type="ChEBI" id="CHEBI:15378"/>
        <dbReference type="ChEBI" id="CHEBI:30616"/>
        <dbReference type="ChEBI" id="CHEBI:33019"/>
        <dbReference type="ChEBI" id="CHEBI:58095"/>
        <dbReference type="ChEBI" id="CHEBI:78442"/>
        <dbReference type="ChEBI" id="CHEBI:78531"/>
        <dbReference type="ChEBI" id="CHEBI:456215"/>
        <dbReference type="EC" id="6.1.1.20"/>
    </reaction>
</comment>
<comment type="cofactor">
    <cofactor evidence="1">
        <name>Mg(2+)</name>
        <dbReference type="ChEBI" id="CHEBI:18420"/>
    </cofactor>
    <text evidence="1">Binds 2 magnesium ions per tetramer.</text>
</comment>
<comment type="subunit">
    <text evidence="1">Tetramer of two alpha and two beta subunits.</text>
</comment>
<comment type="subcellular location">
    <subcellularLocation>
        <location evidence="1">Cytoplasm</location>
    </subcellularLocation>
</comment>
<comment type="similarity">
    <text evidence="1">Belongs to the class-II aminoacyl-tRNA synthetase family. Phe-tRNA synthetase alpha subunit type 1 subfamily.</text>
</comment>
<evidence type="ECO:0000255" key="1">
    <source>
        <dbReference type="HAMAP-Rule" id="MF_00281"/>
    </source>
</evidence>
<dbReference type="EC" id="6.1.1.20" evidence="1"/>
<dbReference type="EMBL" id="BA000045">
    <property type="protein sequence ID" value="BAC91069.1"/>
    <property type="molecule type" value="Genomic_DNA"/>
</dbReference>
<dbReference type="RefSeq" id="NP_926074.1">
    <property type="nucleotide sequence ID" value="NC_005125.1"/>
</dbReference>
<dbReference type="RefSeq" id="WP_011143121.1">
    <property type="nucleotide sequence ID" value="NC_005125.1"/>
</dbReference>
<dbReference type="SMR" id="Q7NGP0"/>
<dbReference type="FunCoup" id="Q7NGP0">
    <property type="interactions" value="379"/>
</dbReference>
<dbReference type="STRING" id="251221.gene:10760634"/>
<dbReference type="EnsemblBacteria" id="BAC91069">
    <property type="protein sequence ID" value="BAC91069"/>
    <property type="gene ID" value="BAC91069"/>
</dbReference>
<dbReference type="KEGG" id="gvi:glr3128"/>
<dbReference type="PATRIC" id="fig|251221.4.peg.3158"/>
<dbReference type="eggNOG" id="COG0016">
    <property type="taxonomic scope" value="Bacteria"/>
</dbReference>
<dbReference type="HOGENOM" id="CLU_025086_0_1_3"/>
<dbReference type="InParanoid" id="Q7NGP0"/>
<dbReference type="OrthoDB" id="9800719at2"/>
<dbReference type="PhylomeDB" id="Q7NGP0"/>
<dbReference type="Proteomes" id="UP000000557">
    <property type="component" value="Chromosome"/>
</dbReference>
<dbReference type="GO" id="GO:0005737">
    <property type="term" value="C:cytoplasm"/>
    <property type="evidence" value="ECO:0000318"/>
    <property type="project" value="GO_Central"/>
</dbReference>
<dbReference type="GO" id="GO:0005524">
    <property type="term" value="F:ATP binding"/>
    <property type="evidence" value="ECO:0007669"/>
    <property type="project" value="UniProtKB-UniRule"/>
</dbReference>
<dbReference type="GO" id="GO:0000287">
    <property type="term" value="F:magnesium ion binding"/>
    <property type="evidence" value="ECO:0007669"/>
    <property type="project" value="UniProtKB-UniRule"/>
</dbReference>
<dbReference type="GO" id="GO:0004826">
    <property type="term" value="F:phenylalanine-tRNA ligase activity"/>
    <property type="evidence" value="ECO:0000318"/>
    <property type="project" value="GO_Central"/>
</dbReference>
<dbReference type="GO" id="GO:0000049">
    <property type="term" value="F:tRNA binding"/>
    <property type="evidence" value="ECO:0007669"/>
    <property type="project" value="InterPro"/>
</dbReference>
<dbReference type="GO" id="GO:0006432">
    <property type="term" value="P:phenylalanyl-tRNA aminoacylation"/>
    <property type="evidence" value="ECO:0000318"/>
    <property type="project" value="GO_Central"/>
</dbReference>
<dbReference type="CDD" id="cd00496">
    <property type="entry name" value="PheRS_alpha_core"/>
    <property type="match status" value="1"/>
</dbReference>
<dbReference type="FunFam" id="3.30.930.10:FF:000003">
    <property type="entry name" value="Phenylalanine--tRNA ligase alpha subunit"/>
    <property type="match status" value="1"/>
</dbReference>
<dbReference type="Gene3D" id="3.30.930.10">
    <property type="entry name" value="Bira Bifunctional Protein, Domain 2"/>
    <property type="match status" value="1"/>
</dbReference>
<dbReference type="HAMAP" id="MF_00281">
    <property type="entry name" value="Phe_tRNA_synth_alpha1"/>
    <property type="match status" value="1"/>
</dbReference>
<dbReference type="InterPro" id="IPR006195">
    <property type="entry name" value="aa-tRNA-synth_II"/>
</dbReference>
<dbReference type="InterPro" id="IPR045864">
    <property type="entry name" value="aa-tRNA-synth_II/BPL/LPL"/>
</dbReference>
<dbReference type="InterPro" id="IPR004529">
    <property type="entry name" value="Phe-tRNA-synth_IIc_asu"/>
</dbReference>
<dbReference type="InterPro" id="IPR004188">
    <property type="entry name" value="Phe-tRNA_ligase_II_N"/>
</dbReference>
<dbReference type="InterPro" id="IPR022911">
    <property type="entry name" value="Phe_tRNA_ligase_alpha1_bac"/>
</dbReference>
<dbReference type="InterPro" id="IPR002319">
    <property type="entry name" value="Phenylalanyl-tRNA_Synthase"/>
</dbReference>
<dbReference type="InterPro" id="IPR010978">
    <property type="entry name" value="tRNA-bd_arm"/>
</dbReference>
<dbReference type="NCBIfam" id="TIGR00468">
    <property type="entry name" value="pheS"/>
    <property type="match status" value="1"/>
</dbReference>
<dbReference type="PANTHER" id="PTHR11538:SF41">
    <property type="entry name" value="PHENYLALANINE--TRNA LIGASE, MITOCHONDRIAL"/>
    <property type="match status" value="1"/>
</dbReference>
<dbReference type="PANTHER" id="PTHR11538">
    <property type="entry name" value="PHENYLALANYL-TRNA SYNTHETASE"/>
    <property type="match status" value="1"/>
</dbReference>
<dbReference type="Pfam" id="PF02912">
    <property type="entry name" value="Phe_tRNA-synt_N"/>
    <property type="match status" value="1"/>
</dbReference>
<dbReference type="Pfam" id="PF01409">
    <property type="entry name" value="tRNA-synt_2d"/>
    <property type="match status" value="1"/>
</dbReference>
<dbReference type="SUPFAM" id="SSF55681">
    <property type="entry name" value="Class II aaRS and biotin synthetases"/>
    <property type="match status" value="1"/>
</dbReference>
<dbReference type="SUPFAM" id="SSF46589">
    <property type="entry name" value="tRNA-binding arm"/>
    <property type="match status" value="1"/>
</dbReference>
<dbReference type="PROSITE" id="PS50862">
    <property type="entry name" value="AA_TRNA_LIGASE_II"/>
    <property type="match status" value="1"/>
</dbReference>
<proteinExistence type="inferred from homology"/>
<feature type="chain" id="PRO_0000126710" description="Phenylalanine--tRNA ligase alpha subunit">
    <location>
        <begin position="1"/>
        <end position="338"/>
    </location>
</feature>
<feature type="binding site" evidence="1">
    <location>
        <position position="253"/>
    </location>
    <ligand>
        <name>Mg(2+)</name>
        <dbReference type="ChEBI" id="CHEBI:18420"/>
        <note>shared with beta subunit</note>
    </ligand>
</feature>
<keyword id="KW-0030">Aminoacyl-tRNA synthetase</keyword>
<keyword id="KW-0067">ATP-binding</keyword>
<keyword id="KW-0963">Cytoplasm</keyword>
<keyword id="KW-0436">Ligase</keyword>
<keyword id="KW-0460">Magnesium</keyword>
<keyword id="KW-0479">Metal-binding</keyword>
<keyword id="KW-0547">Nucleotide-binding</keyword>
<keyword id="KW-0648">Protein biosynthesis</keyword>
<keyword id="KW-1185">Reference proteome</keyword>
<name>SYFA_GLOVI</name>
<organism>
    <name type="scientific">Gloeobacter violaceus (strain ATCC 29082 / PCC 7421)</name>
    <dbReference type="NCBI Taxonomy" id="251221"/>
    <lineage>
        <taxon>Bacteria</taxon>
        <taxon>Bacillati</taxon>
        <taxon>Cyanobacteriota</taxon>
        <taxon>Cyanophyceae</taxon>
        <taxon>Gloeobacterales</taxon>
        <taxon>Gloeobacteraceae</taxon>
        <taxon>Gloeobacter</taxon>
    </lineage>
</organism>